<protein>
    <recommendedName>
        <fullName>Plasma membrane fusion protein prm1</fullName>
    </recommendedName>
</protein>
<organism>
    <name type="scientific">Neosartorya fischeri (strain ATCC 1020 / DSM 3700 / CBS 544.65 / FGSC A1164 / JCM 1740 / NRRL 181 / WB 181)</name>
    <name type="common">Aspergillus fischerianus</name>
    <dbReference type="NCBI Taxonomy" id="331117"/>
    <lineage>
        <taxon>Eukaryota</taxon>
        <taxon>Fungi</taxon>
        <taxon>Dikarya</taxon>
        <taxon>Ascomycota</taxon>
        <taxon>Pezizomycotina</taxon>
        <taxon>Eurotiomycetes</taxon>
        <taxon>Eurotiomycetidae</taxon>
        <taxon>Eurotiales</taxon>
        <taxon>Aspergillaceae</taxon>
        <taxon>Aspergillus</taxon>
        <taxon>Aspergillus subgen. Fumigati</taxon>
    </lineage>
</organism>
<comment type="function">
    <text evidence="1">Involved in cell fusion during mating by stabilizing the plasma membrane fusion event.</text>
</comment>
<comment type="subcellular location">
    <subcellularLocation>
        <location evidence="1">Cell membrane</location>
        <topology evidence="1">Multi-pass membrane protein</topology>
    </subcellularLocation>
</comment>
<comment type="similarity">
    <text evidence="3">Belongs to the PRM1 family.</text>
</comment>
<reference key="1">
    <citation type="journal article" date="2008" name="PLoS Genet.">
        <title>Genomic islands in the pathogenic filamentous fungus Aspergillus fumigatus.</title>
        <authorList>
            <person name="Fedorova N.D."/>
            <person name="Khaldi N."/>
            <person name="Joardar V.S."/>
            <person name="Maiti R."/>
            <person name="Amedeo P."/>
            <person name="Anderson M.J."/>
            <person name="Crabtree J."/>
            <person name="Silva J.C."/>
            <person name="Badger J.H."/>
            <person name="Albarraq A."/>
            <person name="Angiuoli S."/>
            <person name="Bussey H."/>
            <person name="Bowyer P."/>
            <person name="Cotty P.J."/>
            <person name="Dyer P.S."/>
            <person name="Egan A."/>
            <person name="Galens K."/>
            <person name="Fraser-Liggett C.M."/>
            <person name="Haas B.J."/>
            <person name="Inman J.M."/>
            <person name="Kent R."/>
            <person name="Lemieux S."/>
            <person name="Malavazi I."/>
            <person name="Orvis J."/>
            <person name="Roemer T."/>
            <person name="Ronning C.M."/>
            <person name="Sundaram J.P."/>
            <person name="Sutton G."/>
            <person name="Turner G."/>
            <person name="Venter J.C."/>
            <person name="White O.R."/>
            <person name="Whitty B.R."/>
            <person name="Youngman P."/>
            <person name="Wolfe K.H."/>
            <person name="Goldman G.H."/>
            <person name="Wortman J.R."/>
            <person name="Jiang B."/>
            <person name="Denning D.W."/>
            <person name="Nierman W.C."/>
        </authorList>
    </citation>
    <scope>NUCLEOTIDE SEQUENCE [LARGE SCALE GENOMIC DNA]</scope>
    <source>
        <strain>ATCC 1020 / DSM 3700 / CBS 544.65 / FGSC A1164 / JCM 1740 / NRRL 181 / WB 181</strain>
    </source>
</reference>
<feature type="chain" id="PRO_0000337285" description="Plasma membrane fusion protein prm1">
    <location>
        <begin position="1"/>
        <end position="742"/>
    </location>
</feature>
<feature type="topological domain" description="Extracellular" evidence="1">
    <location>
        <begin position="1"/>
        <end position="54"/>
    </location>
</feature>
<feature type="transmembrane region" description="Helical" evidence="2">
    <location>
        <begin position="55"/>
        <end position="75"/>
    </location>
</feature>
<feature type="topological domain" description="Cytoplasmic" evidence="1">
    <location>
        <begin position="76"/>
        <end position="137"/>
    </location>
</feature>
<feature type="transmembrane region" description="Helical" evidence="2">
    <location>
        <begin position="138"/>
        <end position="158"/>
    </location>
</feature>
<feature type="topological domain" description="Extracellular" evidence="1">
    <location>
        <begin position="159"/>
        <end position="320"/>
    </location>
</feature>
<feature type="transmembrane region" description="Helical" evidence="2">
    <location>
        <begin position="321"/>
        <end position="341"/>
    </location>
</feature>
<feature type="topological domain" description="Cytoplasmic" evidence="1">
    <location>
        <begin position="342"/>
        <end position="395"/>
    </location>
</feature>
<feature type="transmembrane region" description="Helical" evidence="2">
    <location>
        <begin position="396"/>
        <end position="418"/>
    </location>
</feature>
<feature type="topological domain" description="Extracellular" evidence="1">
    <location>
        <begin position="419"/>
        <end position="603"/>
    </location>
</feature>
<feature type="transmembrane region" description="Helical" evidence="2">
    <location>
        <begin position="604"/>
        <end position="624"/>
    </location>
</feature>
<feature type="topological domain" description="Cytoplasmic" evidence="1">
    <location>
        <begin position="625"/>
        <end position="742"/>
    </location>
</feature>
<feature type="glycosylation site" description="N-linked (GlcNAc...) asparagine" evidence="2">
    <location>
        <position position="177"/>
    </location>
</feature>
<feature type="glycosylation site" description="N-linked (GlcNAc...) asparagine" evidence="2">
    <location>
        <position position="222"/>
    </location>
</feature>
<feature type="glycosylation site" description="N-linked (GlcNAc...) asparagine" evidence="2">
    <location>
        <position position="245"/>
    </location>
</feature>
<feature type="glycosylation site" description="N-linked (GlcNAc...) asparagine" evidence="2">
    <location>
        <position position="256"/>
    </location>
</feature>
<feature type="glycosylation site" description="N-linked (GlcNAc...) asparagine" evidence="2">
    <location>
        <position position="274"/>
    </location>
</feature>
<feature type="glycosylation site" description="N-linked (GlcNAc...) asparagine" evidence="2">
    <location>
        <position position="454"/>
    </location>
</feature>
<feature type="glycosylation site" description="N-linked (GlcNAc...) asparagine" evidence="2">
    <location>
        <position position="483"/>
    </location>
</feature>
<feature type="glycosylation site" description="N-linked (GlcNAc...) asparagine" evidence="2">
    <location>
        <position position="490"/>
    </location>
</feature>
<feature type="glycosylation site" description="N-linked (GlcNAc...) asparagine" evidence="2">
    <location>
        <position position="505"/>
    </location>
</feature>
<feature type="glycosylation site" description="N-linked (GlcNAc...) asparagine" evidence="2">
    <location>
        <position position="552"/>
    </location>
</feature>
<feature type="glycosylation site" description="N-linked (GlcNAc...) asparagine" evidence="2">
    <location>
        <position position="566"/>
    </location>
</feature>
<evidence type="ECO:0000250" key="1"/>
<evidence type="ECO:0000255" key="2"/>
<evidence type="ECO:0000305" key="3"/>
<proteinExistence type="inferred from homology"/>
<keyword id="KW-1003">Cell membrane</keyword>
<keyword id="KW-0184">Conjugation</keyword>
<keyword id="KW-0325">Glycoprotein</keyword>
<keyword id="KW-0472">Membrane</keyword>
<keyword id="KW-1185">Reference proteome</keyword>
<keyword id="KW-0812">Transmembrane</keyword>
<keyword id="KW-1133">Transmembrane helix</keyword>
<gene>
    <name type="primary">prm1</name>
    <name type="ORF">NFIA_105130</name>
</gene>
<sequence>MLFSRSGRSIFPLLPPYAAHAPNPNQGHIITLPPDGLTPYLGLRARLSQVWINRWTILLLLVLVRVLLAASGLQADMSTAKREALSACTSVESMGSSMASMPHYLSQGVNELTASGVEKAVSGLKSMLMLTITGVEELVLFIIKVLYQTYLCLFTLAVRGSVHVAVGVIEEAADFLNSTVKEVGDDIGKAVSTFESAFNKFLDGVNTVASAFGASVPTLDLNSSISALENLQLPSSIDKGLDKLNSSLPTFDEVNNFTQTVLRTPFEEVKKLVNESLGTYTFDRSLLPVPAKEQLTFCEGNNGIDSFFDSVTDLVMTARKIFIAVLIVAATLACVPMAWQEIRRWRSMKERSQLVRKEAHDPMDVVYIVSRPYTAAAGIKAASRFSNSRRQILVRWAVAYATTPAALFVLCLGVAGLLSCLCQYLLLQAVEKTVPELSTQVGAFADKVVDSLQNASAEWANDANGVIGHMNQDLNENVFGWVNTSTTALNDTLNTFVDKTTGVLNDTFGGTLLYEPLMDVFECLIGLKVQGIQKGLTWVHDHAHIDFPLLPNDTFSRGAAASISSNSSNPSDSFLADAGDQTSNKITEVVIRVVNKVEDGVRTETIISAVIILIWVFIALVGIVRALSLFWVRDRNRGEGGGARVNRHESDAGGFIDVPLTAIPNTNTDARSMPTPAPAPAPRYEASTSTVVASRAVPVSSTHHEDEKLGFAGERQYGSALKVDGAADLRGSSYVEYDMEKR</sequence>
<name>PRM1_NEOFI</name>
<accession>A1CWM3</accession>
<dbReference type="EMBL" id="DS027685">
    <property type="protein sequence ID" value="EAW25025.1"/>
    <property type="molecule type" value="Genomic_DNA"/>
</dbReference>
<dbReference type="RefSeq" id="XP_001266922.1">
    <property type="nucleotide sequence ID" value="XM_001266921.1"/>
</dbReference>
<dbReference type="STRING" id="331117.A1CWM3"/>
<dbReference type="GlyCosmos" id="A1CWM3">
    <property type="glycosylation" value="11 sites, No reported glycans"/>
</dbReference>
<dbReference type="EnsemblFungi" id="EAW25025">
    <property type="protein sequence ID" value="EAW25025"/>
    <property type="gene ID" value="NFIA_105130"/>
</dbReference>
<dbReference type="GeneID" id="4593990"/>
<dbReference type="KEGG" id="nfi:NFIA_105130"/>
<dbReference type="VEuPathDB" id="FungiDB:NFIA_105130"/>
<dbReference type="eggNOG" id="ENOG502QRP5">
    <property type="taxonomic scope" value="Eukaryota"/>
</dbReference>
<dbReference type="HOGENOM" id="CLU_010191_1_0_1"/>
<dbReference type="OMA" id="NVFGWVN"/>
<dbReference type="OrthoDB" id="5356111at2759"/>
<dbReference type="Proteomes" id="UP000006702">
    <property type="component" value="Unassembled WGS sequence"/>
</dbReference>
<dbReference type="GO" id="GO:0043332">
    <property type="term" value="C:mating projection tip"/>
    <property type="evidence" value="ECO:0007669"/>
    <property type="project" value="InterPro"/>
</dbReference>
<dbReference type="GO" id="GO:0005886">
    <property type="term" value="C:plasma membrane"/>
    <property type="evidence" value="ECO:0007669"/>
    <property type="project" value="UniProtKB-SubCell"/>
</dbReference>
<dbReference type="GO" id="GO:0032220">
    <property type="term" value="P:plasma membrane fusion involved in cytogamy"/>
    <property type="evidence" value="ECO:0007669"/>
    <property type="project" value="TreeGrafter"/>
</dbReference>
<dbReference type="InterPro" id="IPR026777">
    <property type="entry name" value="PRM1"/>
</dbReference>
<dbReference type="PANTHER" id="PTHR31030">
    <property type="entry name" value="PLASMA MEMBRANE FUSION PROTEIN PRM1"/>
    <property type="match status" value="1"/>
</dbReference>
<dbReference type="PANTHER" id="PTHR31030:SF1">
    <property type="entry name" value="PLASMA MEMBRANE FUSION PROTEIN PRM1"/>
    <property type="match status" value="1"/>
</dbReference>